<name>PCRB_STAHJ</name>
<gene>
    <name evidence="1" type="primary">pcrB</name>
    <name type="ordered locus">SH1045</name>
</gene>
<dbReference type="EC" id="2.5.1.n9" evidence="1"/>
<dbReference type="EMBL" id="AP006716">
    <property type="protein sequence ID" value="BAE04354.1"/>
    <property type="molecule type" value="Genomic_DNA"/>
</dbReference>
<dbReference type="RefSeq" id="WP_011275351.1">
    <property type="nucleotide sequence ID" value="NC_007168.1"/>
</dbReference>
<dbReference type="SMR" id="Q4L7M1"/>
<dbReference type="KEGG" id="sha:SH1045"/>
<dbReference type="eggNOG" id="COG1646">
    <property type="taxonomic scope" value="Bacteria"/>
</dbReference>
<dbReference type="HOGENOM" id="CLU_095211_0_0_9"/>
<dbReference type="OrthoDB" id="2381757at2"/>
<dbReference type="UniPathway" id="UPA00940"/>
<dbReference type="Proteomes" id="UP000000543">
    <property type="component" value="Chromosome"/>
</dbReference>
<dbReference type="GO" id="GO:0120536">
    <property type="term" value="F:heptaprenylglyceryl phosphate synthase activity"/>
    <property type="evidence" value="ECO:0007669"/>
    <property type="project" value="RHEA"/>
</dbReference>
<dbReference type="GO" id="GO:0000287">
    <property type="term" value="F:magnesium ion binding"/>
    <property type="evidence" value="ECO:0007669"/>
    <property type="project" value="UniProtKB-UniRule"/>
</dbReference>
<dbReference type="GO" id="GO:0046474">
    <property type="term" value="P:glycerophospholipid biosynthetic process"/>
    <property type="evidence" value="ECO:0007669"/>
    <property type="project" value="UniProtKB-UniRule"/>
</dbReference>
<dbReference type="CDD" id="cd02812">
    <property type="entry name" value="PcrB_like"/>
    <property type="match status" value="1"/>
</dbReference>
<dbReference type="FunFam" id="3.20.20.390:FF:000001">
    <property type="entry name" value="Heptaprenylglyceryl phosphate synthase"/>
    <property type="match status" value="1"/>
</dbReference>
<dbReference type="Gene3D" id="3.20.20.390">
    <property type="entry name" value="FMN-linked oxidoreductases"/>
    <property type="match status" value="1"/>
</dbReference>
<dbReference type="HAMAP" id="MF_00112">
    <property type="entry name" value="GGGP_HepGP_synthase"/>
    <property type="match status" value="1"/>
</dbReference>
<dbReference type="InterPro" id="IPR039074">
    <property type="entry name" value="GGGP/HepGP_synthase_I"/>
</dbReference>
<dbReference type="InterPro" id="IPR038597">
    <property type="entry name" value="GGGP/HepGP_synthase_sf"/>
</dbReference>
<dbReference type="InterPro" id="IPR008205">
    <property type="entry name" value="GGGP_HepGP_synthase"/>
</dbReference>
<dbReference type="NCBIfam" id="TIGR01768">
    <property type="entry name" value="GGGP-family"/>
    <property type="match status" value="1"/>
</dbReference>
<dbReference type="NCBIfam" id="NF003197">
    <property type="entry name" value="PRK04169.1-1"/>
    <property type="match status" value="1"/>
</dbReference>
<dbReference type="NCBIfam" id="NF003199">
    <property type="entry name" value="PRK04169.1-3"/>
    <property type="match status" value="1"/>
</dbReference>
<dbReference type="NCBIfam" id="NF003200">
    <property type="entry name" value="PRK04169.1-4"/>
    <property type="match status" value="1"/>
</dbReference>
<dbReference type="PANTHER" id="PTHR40029">
    <property type="match status" value="1"/>
</dbReference>
<dbReference type="PANTHER" id="PTHR40029:SF2">
    <property type="entry name" value="HEPTAPRENYLGLYCERYL PHOSPHATE SYNTHASE"/>
    <property type="match status" value="1"/>
</dbReference>
<dbReference type="Pfam" id="PF01884">
    <property type="entry name" value="PcrB"/>
    <property type="match status" value="1"/>
</dbReference>
<dbReference type="SUPFAM" id="SSF51395">
    <property type="entry name" value="FMN-linked oxidoreductases"/>
    <property type="match status" value="1"/>
</dbReference>
<protein>
    <recommendedName>
        <fullName evidence="1">Heptaprenylglyceryl phosphate synthase</fullName>
        <shortName evidence="1">HepGP synthase</shortName>
        <ecNumber evidence="1">2.5.1.n9</ecNumber>
    </recommendedName>
    <alternativeName>
        <fullName evidence="1">Glycerol-1-phosphate heptaprenyltransferase</fullName>
    </alternativeName>
</protein>
<evidence type="ECO:0000255" key="1">
    <source>
        <dbReference type="HAMAP-Rule" id="MF_00112"/>
    </source>
</evidence>
<comment type="function">
    <text evidence="1">Prenyltransferase that catalyzes in vivo the transfer of the heptaprenyl moiety of heptaprenyl pyrophosphate (HepPP; 35 carbon atoms) to the C3 hydroxyl of sn-glycerol-1-phosphate (G1P), producing heptaprenylglyceryl phosphate (HepGP). This reaction is an ether-bond-formation step in the biosynthesis of archaea-type G1P-based membrane lipids found in Bacillales.</text>
</comment>
<comment type="catalytic activity">
    <reaction evidence="1">
        <text>sn-glycerol 1-phosphate + all-trans-heptaprenyl diphosphate = 3-heptaprenyl-sn-glycero-1-phosphate + diphosphate</text>
        <dbReference type="Rhea" id="RHEA:33495"/>
        <dbReference type="ChEBI" id="CHEBI:33019"/>
        <dbReference type="ChEBI" id="CHEBI:57685"/>
        <dbReference type="ChEBI" id="CHEBI:58206"/>
        <dbReference type="ChEBI" id="CHEBI:64781"/>
        <dbReference type="EC" id="2.5.1.n9"/>
    </reaction>
</comment>
<comment type="cofactor">
    <cofactor evidence="1">
        <name>Mg(2+)</name>
        <dbReference type="ChEBI" id="CHEBI:18420"/>
    </cofactor>
</comment>
<comment type="pathway">
    <text evidence="1">Membrane lipid metabolism; glycerophospholipid metabolism.</text>
</comment>
<comment type="subunit">
    <text evidence="1">Homodimer.</text>
</comment>
<comment type="similarity">
    <text evidence="1">Belongs to the GGGP/HepGP synthase family. Group I subfamily.</text>
</comment>
<reference key="1">
    <citation type="journal article" date="2005" name="J. Bacteriol.">
        <title>Whole-genome sequencing of Staphylococcus haemolyticus uncovers the extreme plasticity of its genome and the evolution of human-colonizing staphylococcal species.</title>
        <authorList>
            <person name="Takeuchi F."/>
            <person name="Watanabe S."/>
            <person name="Baba T."/>
            <person name="Yuzawa H."/>
            <person name="Ito T."/>
            <person name="Morimoto Y."/>
            <person name="Kuroda M."/>
            <person name="Cui L."/>
            <person name="Takahashi M."/>
            <person name="Ankai A."/>
            <person name="Baba S."/>
            <person name="Fukui S."/>
            <person name="Lee J.C."/>
            <person name="Hiramatsu K."/>
        </authorList>
    </citation>
    <scope>NUCLEOTIDE SEQUENCE [LARGE SCALE GENOMIC DNA]</scope>
    <source>
        <strain>JCSC1435</strain>
    </source>
</reference>
<organism>
    <name type="scientific">Staphylococcus haemolyticus (strain JCSC1435)</name>
    <dbReference type="NCBI Taxonomy" id="279808"/>
    <lineage>
        <taxon>Bacteria</taxon>
        <taxon>Bacillati</taxon>
        <taxon>Bacillota</taxon>
        <taxon>Bacilli</taxon>
        <taxon>Bacillales</taxon>
        <taxon>Staphylococcaceae</taxon>
        <taxon>Staphylococcus</taxon>
    </lineage>
</organism>
<accession>Q4L7M1</accession>
<proteinExistence type="inferred from homology"/>
<keyword id="KW-0444">Lipid biosynthesis</keyword>
<keyword id="KW-0443">Lipid metabolism</keyword>
<keyword id="KW-0460">Magnesium</keyword>
<keyword id="KW-0479">Metal-binding</keyword>
<keyword id="KW-0594">Phospholipid biosynthesis</keyword>
<keyword id="KW-1208">Phospholipid metabolism</keyword>
<keyword id="KW-0808">Transferase</keyword>
<feature type="chain" id="PRO_0000138726" description="Heptaprenylglyceryl phosphate synthase">
    <location>
        <begin position="1"/>
        <end position="231"/>
    </location>
</feature>
<feature type="binding site" evidence="1">
    <location>
        <position position="12"/>
    </location>
    <ligand>
        <name>sn-glycerol 1-phosphate</name>
        <dbReference type="ChEBI" id="CHEBI:57685"/>
    </ligand>
</feature>
<feature type="binding site" evidence="1">
    <location>
        <position position="14"/>
    </location>
    <ligand>
        <name>Mg(2+)</name>
        <dbReference type="ChEBI" id="CHEBI:18420"/>
    </ligand>
</feature>
<feature type="binding site" evidence="1">
    <location>
        <position position="40"/>
    </location>
    <ligand>
        <name>Mg(2+)</name>
        <dbReference type="ChEBI" id="CHEBI:18420"/>
    </ligand>
</feature>
<feature type="binding site" evidence="1">
    <location>
        <begin position="159"/>
        <end position="164"/>
    </location>
    <ligand>
        <name>sn-glycerol 1-phosphate</name>
        <dbReference type="ChEBI" id="CHEBI:57685"/>
    </ligand>
</feature>
<feature type="binding site" evidence="1">
    <location>
        <position position="189"/>
    </location>
    <ligand>
        <name>sn-glycerol 1-phosphate</name>
        <dbReference type="ChEBI" id="CHEBI:57685"/>
    </ligand>
</feature>
<feature type="binding site" evidence="1">
    <location>
        <begin position="209"/>
        <end position="210"/>
    </location>
    <ligand>
        <name>sn-glycerol 1-phosphate</name>
        <dbReference type="ChEBI" id="CHEBI:57685"/>
    </ligand>
</feature>
<sequence>MYDIKAWQHVFKLDPAKEISDNDLDALCMSDTDAIMIGGTDNVTEDNVIHLMSRVRRYPLPLVLEISNIESIIPGFDFYFVPTVLNSQDTTYHNGMMHKALKQFGFMVNFDEVVLEGYLVLNPDSKVAKLTQSNTNIDIEDVEAYAQMVNEMYKLPLMYLEYSGQYGDVEKVEAASRLLTNTQLFYGGGITSIEQAREMAQYADTIVVGNIIYDDIKKAIKTVKIKKESNK</sequence>